<protein>
    <recommendedName>
        <fullName evidence="1">Phosphoglycerate kinase</fullName>
        <ecNumber evidence="1">2.7.2.3</ecNumber>
    </recommendedName>
</protein>
<feature type="chain" id="PRO_1000192805" description="Phosphoglycerate kinase">
    <location>
        <begin position="1"/>
        <end position="392"/>
    </location>
</feature>
<feature type="binding site" evidence="1">
    <location>
        <begin position="21"/>
        <end position="23"/>
    </location>
    <ligand>
        <name>substrate</name>
    </ligand>
</feature>
<feature type="binding site" evidence="1">
    <location>
        <position position="36"/>
    </location>
    <ligand>
        <name>substrate</name>
    </ligand>
</feature>
<feature type="binding site" evidence="1">
    <location>
        <begin position="59"/>
        <end position="62"/>
    </location>
    <ligand>
        <name>substrate</name>
    </ligand>
</feature>
<feature type="binding site" evidence="1">
    <location>
        <position position="118"/>
    </location>
    <ligand>
        <name>substrate</name>
    </ligand>
</feature>
<feature type="binding site" evidence="1">
    <location>
        <position position="151"/>
    </location>
    <ligand>
        <name>substrate</name>
    </ligand>
</feature>
<feature type="binding site" evidence="1">
    <location>
        <position position="201"/>
    </location>
    <ligand>
        <name>ATP</name>
        <dbReference type="ChEBI" id="CHEBI:30616"/>
    </ligand>
</feature>
<feature type="binding site" evidence="1">
    <location>
        <position position="292"/>
    </location>
    <ligand>
        <name>ATP</name>
        <dbReference type="ChEBI" id="CHEBI:30616"/>
    </ligand>
</feature>
<feature type="binding site" evidence="1">
    <location>
        <position position="323"/>
    </location>
    <ligand>
        <name>ATP</name>
        <dbReference type="ChEBI" id="CHEBI:30616"/>
    </ligand>
</feature>
<feature type="binding site" evidence="1">
    <location>
        <begin position="349"/>
        <end position="352"/>
    </location>
    <ligand>
        <name>ATP</name>
        <dbReference type="ChEBI" id="CHEBI:30616"/>
    </ligand>
</feature>
<organism>
    <name type="scientific">Borrelia duttonii (strain Ly)</name>
    <dbReference type="NCBI Taxonomy" id="412419"/>
    <lineage>
        <taxon>Bacteria</taxon>
        <taxon>Pseudomonadati</taxon>
        <taxon>Spirochaetota</taxon>
        <taxon>Spirochaetia</taxon>
        <taxon>Spirochaetales</taxon>
        <taxon>Borreliaceae</taxon>
        <taxon>Borrelia</taxon>
    </lineage>
</organism>
<evidence type="ECO:0000255" key="1">
    <source>
        <dbReference type="HAMAP-Rule" id="MF_00145"/>
    </source>
</evidence>
<keyword id="KW-0067">ATP-binding</keyword>
<keyword id="KW-0963">Cytoplasm</keyword>
<keyword id="KW-0324">Glycolysis</keyword>
<keyword id="KW-0418">Kinase</keyword>
<keyword id="KW-0547">Nucleotide-binding</keyword>
<keyword id="KW-0808">Transferase</keyword>
<sequence length="392" mass="42296">MSIRTIKDCDFSGKRALVRCDFNVPLREGNITDDTRIKAALPTIEYLKSQGARVVLMSHLGRPKGEKNLRYSLMPIARRLSELLGQNVKMLSDCIGDEVVTAVSCMQNGDVVLLENVRFYKEEEENSDAFAMQLSKSGDIFVNDAFGTAHRAHASTSGVASYLPAVGGFLMEREDEFLGKILKNPESPFVSIIGGSKVSSKIAVLESLLPKSNVMVIGGGMAYTFLKVEGYSIGKSLLENEYIDVASSFLKKAKELSVEVILPIDHVVASEFQEYSMPEYVDSVNIPDSKIGMDIGEKTLKKIEGVLSSAKTVIWNGPLGVFEFDSFAKGTAKVAEYVANCPGITVVGGGDSVAAVNKFNLSGKITHVSTGGGASLEYLEGKVLPGIKVLEV</sequence>
<proteinExistence type="inferred from homology"/>
<gene>
    <name evidence="1" type="primary">pgk</name>
    <name type="ordered locus">BDU_60</name>
</gene>
<reference key="1">
    <citation type="journal article" date="2008" name="PLoS Genet.">
        <title>The genome of Borrelia recurrentis, the agent of deadly louse-borne relapsing fever, is a degraded subset of tick-borne Borrelia duttonii.</title>
        <authorList>
            <person name="Lescot M."/>
            <person name="Audic S."/>
            <person name="Robert C."/>
            <person name="Nguyen T.T."/>
            <person name="Blanc G."/>
            <person name="Cutler S.J."/>
            <person name="Wincker P."/>
            <person name="Couloux A."/>
            <person name="Claverie J.-M."/>
            <person name="Raoult D."/>
            <person name="Drancourt M."/>
        </authorList>
    </citation>
    <scope>NUCLEOTIDE SEQUENCE [LARGE SCALE GENOMIC DNA]</scope>
    <source>
        <strain>Ly</strain>
    </source>
</reference>
<comment type="catalytic activity">
    <reaction evidence="1">
        <text>(2R)-3-phosphoglycerate + ATP = (2R)-3-phospho-glyceroyl phosphate + ADP</text>
        <dbReference type="Rhea" id="RHEA:14801"/>
        <dbReference type="ChEBI" id="CHEBI:30616"/>
        <dbReference type="ChEBI" id="CHEBI:57604"/>
        <dbReference type="ChEBI" id="CHEBI:58272"/>
        <dbReference type="ChEBI" id="CHEBI:456216"/>
        <dbReference type="EC" id="2.7.2.3"/>
    </reaction>
</comment>
<comment type="pathway">
    <text evidence="1">Carbohydrate degradation; glycolysis; pyruvate from D-glyceraldehyde 3-phosphate: step 2/5.</text>
</comment>
<comment type="subunit">
    <text evidence="1">Monomer.</text>
</comment>
<comment type="subcellular location">
    <subcellularLocation>
        <location evidence="1">Cytoplasm</location>
    </subcellularLocation>
</comment>
<comment type="similarity">
    <text evidence="1">Belongs to the phosphoglycerate kinase family.</text>
</comment>
<dbReference type="EC" id="2.7.2.3" evidence="1"/>
<dbReference type="EMBL" id="CP000976">
    <property type="protein sequence ID" value="ACH93016.1"/>
    <property type="molecule type" value="Genomic_DNA"/>
</dbReference>
<dbReference type="RefSeq" id="WP_012537828.1">
    <property type="nucleotide sequence ID" value="NC_011229.1"/>
</dbReference>
<dbReference type="SMR" id="B5RKV5"/>
<dbReference type="STRING" id="412419.BDU_60"/>
<dbReference type="KEGG" id="bdu:BDU_60"/>
<dbReference type="eggNOG" id="COG0126">
    <property type="taxonomic scope" value="Bacteria"/>
</dbReference>
<dbReference type="HOGENOM" id="CLU_025427_0_2_12"/>
<dbReference type="OrthoDB" id="9808460at2"/>
<dbReference type="UniPathway" id="UPA00109">
    <property type="reaction ID" value="UER00185"/>
</dbReference>
<dbReference type="Proteomes" id="UP000000611">
    <property type="component" value="Chromosome"/>
</dbReference>
<dbReference type="GO" id="GO:0005829">
    <property type="term" value="C:cytosol"/>
    <property type="evidence" value="ECO:0007669"/>
    <property type="project" value="TreeGrafter"/>
</dbReference>
<dbReference type="GO" id="GO:0043531">
    <property type="term" value="F:ADP binding"/>
    <property type="evidence" value="ECO:0007669"/>
    <property type="project" value="TreeGrafter"/>
</dbReference>
<dbReference type="GO" id="GO:0005524">
    <property type="term" value="F:ATP binding"/>
    <property type="evidence" value="ECO:0007669"/>
    <property type="project" value="UniProtKB-KW"/>
</dbReference>
<dbReference type="GO" id="GO:0004618">
    <property type="term" value="F:phosphoglycerate kinase activity"/>
    <property type="evidence" value="ECO:0007669"/>
    <property type="project" value="UniProtKB-UniRule"/>
</dbReference>
<dbReference type="GO" id="GO:0006094">
    <property type="term" value="P:gluconeogenesis"/>
    <property type="evidence" value="ECO:0007669"/>
    <property type="project" value="TreeGrafter"/>
</dbReference>
<dbReference type="GO" id="GO:0006096">
    <property type="term" value="P:glycolytic process"/>
    <property type="evidence" value="ECO:0007669"/>
    <property type="project" value="UniProtKB-UniRule"/>
</dbReference>
<dbReference type="CDD" id="cd00318">
    <property type="entry name" value="Phosphoglycerate_kinase"/>
    <property type="match status" value="1"/>
</dbReference>
<dbReference type="FunFam" id="3.40.50.1260:FF:000002">
    <property type="entry name" value="Phosphoglycerate kinase"/>
    <property type="match status" value="1"/>
</dbReference>
<dbReference type="FunFam" id="3.40.50.1260:FF:000007">
    <property type="entry name" value="Phosphoglycerate kinase"/>
    <property type="match status" value="1"/>
</dbReference>
<dbReference type="Gene3D" id="3.40.50.1260">
    <property type="entry name" value="Phosphoglycerate kinase, N-terminal domain"/>
    <property type="match status" value="2"/>
</dbReference>
<dbReference type="HAMAP" id="MF_00145">
    <property type="entry name" value="Phosphoglyc_kinase"/>
    <property type="match status" value="1"/>
</dbReference>
<dbReference type="InterPro" id="IPR001576">
    <property type="entry name" value="Phosphoglycerate_kinase"/>
</dbReference>
<dbReference type="InterPro" id="IPR015824">
    <property type="entry name" value="Phosphoglycerate_kinase_N"/>
</dbReference>
<dbReference type="InterPro" id="IPR036043">
    <property type="entry name" value="Phosphoglycerate_kinase_sf"/>
</dbReference>
<dbReference type="PANTHER" id="PTHR11406">
    <property type="entry name" value="PHOSPHOGLYCERATE KINASE"/>
    <property type="match status" value="1"/>
</dbReference>
<dbReference type="PANTHER" id="PTHR11406:SF23">
    <property type="entry name" value="PHOSPHOGLYCERATE KINASE 1, CHLOROPLASTIC-RELATED"/>
    <property type="match status" value="1"/>
</dbReference>
<dbReference type="Pfam" id="PF00162">
    <property type="entry name" value="PGK"/>
    <property type="match status" value="1"/>
</dbReference>
<dbReference type="PIRSF" id="PIRSF000724">
    <property type="entry name" value="Pgk"/>
    <property type="match status" value="1"/>
</dbReference>
<dbReference type="PRINTS" id="PR00477">
    <property type="entry name" value="PHGLYCKINASE"/>
</dbReference>
<dbReference type="SUPFAM" id="SSF53748">
    <property type="entry name" value="Phosphoglycerate kinase"/>
    <property type="match status" value="1"/>
</dbReference>
<accession>B5RKV5</accession>
<name>PGK_BORDL</name>